<dbReference type="EMBL" id="X54080">
    <property type="protein sequence ID" value="CAA38017.1"/>
    <property type="molecule type" value="mRNA"/>
</dbReference>
<dbReference type="PIR" id="S13099">
    <property type="entry name" value="S13099"/>
</dbReference>
<dbReference type="PIR" id="S65385">
    <property type="entry name" value="S65385"/>
</dbReference>
<dbReference type="RefSeq" id="NP_071948.1">
    <property type="nucleotide sequence ID" value="NM_022503.2"/>
</dbReference>
<dbReference type="RefSeq" id="XP_003751415.1">
    <property type="nucleotide sequence ID" value="XM_003751367.3"/>
</dbReference>
<dbReference type="RefSeq" id="XP_003752782.1">
    <property type="nucleotide sequence ID" value="XM_003752734.3"/>
</dbReference>
<dbReference type="RefSeq" id="XP_063121087.1">
    <property type="nucleotide sequence ID" value="XM_063265017.1"/>
</dbReference>
<dbReference type="SMR" id="P35171"/>
<dbReference type="BioGRID" id="248145">
    <property type="interactions" value="1"/>
</dbReference>
<dbReference type="CORUM" id="P35171"/>
<dbReference type="FunCoup" id="P35171">
    <property type="interactions" value="847"/>
</dbReference>
<dbReference type="IntAct" id="P35171">
    <property type="interactions" value="2"/>
</dbReference>
<dbReference type="MINT" id="P35171"/>
<dbReference type="STRING" id="10116.ENSRNOP00000060398"/>
<dbReference type="CarbonylDB" id="P35171"/>
<dbReference type="GlyGen" id="P35171">
    <property type="glycosylation" value="1 site, 1 O-linked glycan (1 site)"/>
</dbReference>
<dbReference type="iPTMnet" id="P35171"/>
<dbReference type="PhosphoSitePlus" id="P35171"/>
<dbReference type="jPOST" id="P35171"/>
<dbReference type="PaxDb" id="10116-ENSRNOP00000037372"/>
<dbReference type="Ensembl" id="ENSRNOT00000038497.6">
    <property type="protein sequence ID" value="ENSRNOP00000094897.1"/>
    <property type="gene ID" value="ENSRNOG00000027791.6"/>
</dbReference>
<dbReference type="GeneID" id="29507"/>
<dbReference type="GeneID" id="688386"/>
<dbReference type="KEGG" id="rno:29507"/>
<dbReference type="KEGG" id="rno:688386"/>
<dbReference type="UCSC" id="RGD:68365">
    <property type="organism name" value="rat"/>
</dbReference>
<dbReference type="AGR" id="RGD:1589992"/>
<dbReference type="AGR" id="RGD:68365"/>
<dbReference type="CTD" id="1347"/>
<dbReference type="CTD" id="688386"/>
<dbReference type="RGD" id="68365">
    <property type="gene designation" value="Cox7a2"/>
</dbReference>
<dbReference type="VEuPathDB" id="HostDB:ENSRNOG00000042903"/>
<dbReference type="eggNOG" id="ENOG502S4DT">
    <property type="taxonomic scope" value="Eukaryota"/>
</dbReference>
<dbReference type="GeneTree" id="ENSGT00940000154550"/>
<dbReference type="HOGENOM" id="CLU_173437_0_0_1"/>
<dbReference type="InParanoid" id="P35171"/>
<dbReference type="OMA" id="WAVTAKM"/>
<dbReference type="OrthoDB" id="45220at9989"/>
<dbReference type="PhylomeDB" id="P35171"/>
<dbReference type="TreeFam" id="TF105067"/>
<dbReference type="Reactome" id="R-RNO-5628897">
    <property type="pathway name" value="TP53 Regulates Metabolic Genes"/>
</dbReference>
<dbReference type="Reactome" id="R-RNO-611105">
    <property type="pathway name" value="Respiratory electron transport"/>
</dbReference>
<dbReference type="Reactome" id="R-RNO-9707564">
    <property type="pathway name" value="Cytoprotection by HMOX1"/>
</dbReference>
<dbReference type="UniPathway" id="UPA00705"/>
<dbReference type="PRO" id="PR:P35171"/>
<dbReference type="Proteomes" id="UP000002494">
    <property type="component" value="Chromosome 14"/>
</dbReference>
<dbReference type="Bgee" id="ENSRNOG00000042903">
    <property type="expression patterns" value="Expressed in heart and 19 other cell types or tissues"/>
</dbReference>
<dbReference type="ExpressionAtlas" id="P35171">
    <property type="expression patterns" value="baseline and differential"/>
</dbReference>
<dbReference type="GO" id="GO:0005743">
    <property type="term" value="C:mitochondrial inner membrane"/>
    <property type="evidence" value="ECO:0000266"/>
    <property type="project" value="RGD"/>
</dbReference>
<dbReference type="GO" id="GO:0031966">
    <property type="term" value="C:mitochondrial membrane"/>
    <property type="evidence" value="ECO:0000266"/>
    <property type="project" value="RGD"/>
</dbReference>
<dbReference type="GO" id="GO:0098803">
    <property type="term" value="C:respiratory chain complex"/>
    <property type="evidence" value="ECO:0000318"/>
    <property type="project" value="GO_Central"/>
</dbReference>
<dbReference type="GO" id="GO:0045277">
    <property type="term" value="C:respiratory chain complex IV"/>
    <property type="evidence" value="ECO:0000266"/>
    <property type="project" value="RGD"/>
</dbReference>
<dbReference type="GO" id="GO:0016491">
    <property type="term" value="F:oxidoreductase activity"/>
    <property type="evidence" value="ECO:0007669"/>
    <property type="project" value="UniProtKB-KW"/>
</dbReference>
<dbReference type="GO" id="GO:0006123">
    <property type="term" value="P:mitochondrial electron transport, cytochrome c to oxygen"/>
    <property type="evidence" value="ECO:0007669"/>
    <property type="project" value="InterPro"/>
</dbReference>
<dbReference type="GO" id="GO:0097250">
    <property type="term" value="P:mitochondrial respirasome assembly"/>
    <property type="evidence" value="ECO:0000318"/>
    <property type="project" value="GO_Central"/>
</dbReference>
<dbReference type="CDD" id="cd00928">
    <property type="entry name" value="Cyt_c_Oxidase_VIIa"/>
    <property type="match status" value="1"/>
</dbReference>
<dbReference type="FunFam" id="4.10.91.10:FF:000001">
    <property type="entry name" value="Cytochrome c oxidase subunit 7A1, mitochondrial"/>
    <property type="match status" value="1"/>
</dbReference>
<dbReference type="Gene3D" id="4.10.91.10">
    <property type="entry name" value="Cytochrome c oxidase, subunit VIIa"/>
    <property type="match status" value="1"/>
</dbReference>
<dbReference type="InterPro" id="IPR039297">
    <property type="entry name" value="COX7a"/>
</dbReference>
<dbReference type="InterPro" id="IPR036539">
    <property type="entry name" value="Cyt_c_oxidase_su7a_sf"/>
</dbReference>
<dbReference type="InterPro" id="IPR003177">
    <property type="entry name" value="Cytc_oxidase_su7a_met"/>
</dbReference>
<dbReference type="PANTHER" id="PTHR10510">
    <property type="entry name" value="CYTOCHROME C OXIDASE POLYPEPTIDE 7A"/>
    <property type="match status" value="1"/>
</dbReference>
<dbReference type="PANTHER" id="PTHR10510:SF15">
    <property type="entry name" value="CYTOCHROME C OXIDASE SUBUNIT 7A2, MITOCHONDRIAL"/>
    <property type="match status" value="1"/>
</dbReference>
<dbReference type="Pfam" id="PF02238">
    <property type="entry name" value="COX7a"/>
    <property type="match status" value="1"/>
</dbReference>
<dbReference type="SUPFAM" id="SSF81419">
    <property type="entry name" value="Mitochondrial cytochrome c oxidase subunit VIIa"/>
    <property type="match status" value="1"/>
</dbReference>
<name>CX7A2_RAT</name>
<proteinExistence type="evidence at protein level"/>
<organism>
    <name type="scientific">Rattus norvegicus</name>
    <name type="common">Rat</name>
    <dbReference type="NCBI Taxonomy" id="10116"/>
    <lineage>
        <taxon>Eukaryota</taxon>
        <taxon>Metazoa</taxon>
        <taxon>Chordata</taxon>
        <taxon>Craniata</taxon>
        <taxon>Vertebrata</taxon>
        <taxon>Euteleostomi</taxon>
        <taxon>Mammalia</taxon>
        <taxon>Eutheria</taxon>
        <taxon>Euarchontoglires</taxon>
        <taxon>Glires</taxon>
        <taxon>Rodentia</taxon>
        <taxon>Myomorpha</taxon>
        <taxon>Muroidea</taxon>
        <taxon>Muridae</taxon>
        <taxon>Murinae</taxon>
        <taxon>Rattus</taxon>
    </lineage>
</organism>
<accession>P35171</accession>
<reference key="1">
    <citation type="journal article" date="1990" name="Nucleic Acids Res.">
        <title>Nucleotide sequence of cDNA encoding subunit VIIa of rat liver cytochrome c oxidase.</title>
        <authorList>
            <person name="Enders C."/>
            <person name="Schlerf A."/>
            <person name="Mell O."/>
            <person name="Grossman L.I."/>
            <person name="Kadenbach B."/>
        </authorList>
    </citation>
    <scope>NUCLEOTIDE SEQUENCE [MRNA]</scope>
    <source>
        <strain>Wistar</strain>
        <tissue>Liver</tissue>
    </source>
</reference>
<reference key="2">
    <citation type="journal article" date="1990" name="Pediatr. Res.">
        <title>Isoforms of mammalian cytochrome c oxidase: correlation with human cytochrome c oxidase deficiency.</title>
        <authorList>
            <person name="Kennaway N.G."/>
            <person name="Carrero-Valenzuela R.D."/>
            <person name="Ewart G."/>
            <person name="Balan V.K."/>
            <person name="Lightowlers R.N."/>
            <person name="Zhang Y.-Z."/>
            <person name="Powell B.R."/>
            <person name="Capaldi R.A."/>
            <person name="Buist N.R.M."/>
        </authorList>
    </citation>
    <scope>PROTEIN SEQUENCE OF 24-47</scope>
    <source>
        <tissue>Heart</tissue>
    </source>
</reference>
<reference key="3">
    <citation type="journal article" date="1995" name="Eur. J. Biochem.">
        <title>Cytochrome-c oxidase in developing rat heart. Enzymic properties and amino-terminal sequences suggest identity of the fetal heart and the adult liver isoform.</title>
        <authorList>
            <person name="Schaegger H."/>
            <person name="Noack H."/>
            <person name="Halangk W."/>
            <person name="Brandt U."/>
            <person name="von Jagow G."/>
        </authorList>
    </citation>
    <scope>PROTEIN SEQUENCE OF 24-33</scope>
    <source>
        <strain>Wistar</strain>
        <tissue>Heart</tissue>
        <tissue>Liver</tissue>
    </source>
</reference>
<reference key="4">
    <citation type="submission" date="2007-07" db="UniProtKB">
        <authorList>
            <person name="Lubec G."/>
            <person name="Kang S.U."/>
        </authorList>
    </citation>
    <scope>PROTEIN SEQUENCE OF 47-56</scope>
    <scope>IDENTIFICATION BY MASS SPECTROMETRY</scope>
    <source>
        <strain>Sprague-Dawley</strain>
        <tissue>Brain</tissue>
    </source>
</reference>
<evidence type="ECO:0000250" key="1">
    <source>
        <dbReference type="UniProtKB" id="P07470"/>
    </source>
</evidence>
<evidence type="ECO:0000250" key="2">
    <source>
        <dbReference type="UniProtKB" id="P10174"/>
    </source>
</evidence>
<evidence type="ECO:0000250" key="3">
    <source>
        <dbReference type="UniProtKB" id="P14406"/>
    </source>
</evidence>
<evidence type="ECO:0000250" key="4">
    <source>
        <dbReference type="UniProtKB" id="P48771"/>
    </source>
</evidence>
<evidence type="ECO:0000269" key="5">
    <source>
    </source>
</evidence>
<evidence type="ECO:0000269" key="6">
    <source>
    </source>
</evidence>
<evidence type="ECO:0000305" key="7"/>
<protein>
    <recommendedName>
        <fullName>Cytochrome c oxidase subunit 7A2, mitochondrial</fullName>
    </recommendedName>
    <alternativeName>
        <fullName>Cytochrome c oxidase subunit VIIa-liver/heart</fullName>
        <shortName>Cytochrome c oxidase subunit VIIa-L</shortName>
    </alternativeName>
</protein>
<sequence>MLRNVLALRQIAQRTISTTSRRHFENKVPEKQKLFQEDNGMPVHLKGGTSDALLYRATMLLTVGGTAYAIYMLAMAAFPKKQN</sequence>
<comment type="function">
    <text evidence="2">Component of the cytochrome c oxidase, the last enzyme in the mitochondrial electron transport chain which drives oxidative phosphorylation. The respiratory chain contains 3 multisubunit complexes succinate dehydrogenase (complex II, CII), ubiquinol-cytochrome c oxidoreductase (cytochrome b-c1 complex, complex III, CIII) and cytochrome c oxidase (complex IV, CIV), that cooperate to transfer electrons derived from NADH and succinate to molecular oxygen, creating an electrochemical gradient over the inner membrane that drives transmembrane transport and the ATP synthase. Cytochrome c oxidase is the component of the respiratory chain that catalyzes the reduction of oxygen to water. Electrons originating from reduced cytochrome c in the intermembrane space (IMS) are transferred via the dinuclear copper A center (CU(A)) of subunit 2 and heme A of subunit 1 to the active site in subunit 1, a binuclear center (BNC) formed by heme A3 and copper B (CU(B)). The BNC reduces molecular oxygen to 2 water molecules using 4 electrons from cytochrome c in the IMS and 4 protons from the mitochondrial matrix.</text>
</comment>
<comment type="pathway">
    <text evidence="2">Energy metabolism; oxidative phosphorylation.</text>
</comment>
<comment type="subunit">
    <text evidence="3">Component of the cytochrome c oxidase (complex IV, CIV), a multisubunit enzyme composed of 14 subunits. The complex is composed of a catalytic core of 3 subunits MT-CO1, MT-CO2 and MT-CO3, encoded in the mitochondrial DNA, and 11 supernumerary subunits COX4I, COX5A, COX5B, COX6A, COX6B, COX6C, COX7A, COX7B, COX7C, COX8 and NDUFA4, which are encoded in the nuclear genome. The complex exists as a monomer or a dimer and forms supercomplexes (SCs) in the inner mitochondrial membrane with NADH-ubiquinone oxidoreductase (complex I, CI) and ubiquinol-cytochrome c oxidoreductase (cytochrome b-c1 complex, complex III, CIII), resulting in different assemblies (supercomplex SCI(1)III(2)IV(1) and megacomplex MCI(2)III(2)IV(2)). Interacts with PET100.</text>
</comment>
<comment type="subcellular location">
    <subcellularLocation>
        <location evidence="3">Mitochondrion inner membrane</location>
        <topology evidence="3">Single-pass membrane protein</topology>
    </subcellularLocation>
</comment>
<comment type="similarity">
    <text evidence="7">Belongs to the cytochrome c oxidase VIIa family.</text>
</comment>
<keyword id="KW-0007">Acetylation</keyword>
<keyword id="KW-0903">Direct protein sequencing</keyword>
<keyword id="KW-0472">Membrane</keyword>
<keyword id="KW-0496">Mitochondrion</keyword>
<keyword id="KW-0999">Mitochondrion inner membrane</keyword>
<keyword id="KW-0560">Oxidoreductase</keyword>
<keyword id="KW-1185">Reference proteome</keyword>
<keyword id="KW-0809">Transit peptide</keyword>
<keyword id="KW-0812">Transmembrane</keyword>
<keyword id="KW-1133">Transmembrane helix</keyword>
<gene>
    <name type="primary">Cox7a2</name>
    <name type="synonym">Cox7a3</name>
    <name type="synonym">Cox7al</name>
</gene>
<feature type="transit peptide" description="Mitochondrion" evidence="5 6">
    <location>
        <begin position="1"/>
        <end position="23"/>
    </location>
</feature>
<feature type="chain" id="PRO_0000006147" description="Cytochrome c oxidase subunit 7A2, mitochondrial">
    <location>
        <begin position="24"/>
        <end position="83"/>
    </location>
</feature>
<feature type="topological domain" description="Mitochondrial matrix" evidence="3">
    <location>
        <begin position="24"/>
        <end position="48"/>
    </location>
</feature>
<feature type="transmembrane region" description="Helical" evidence="1">
    <location>
        <begin position="49"/>
        <end position="77"/>
    </location>
</feature>
<feature type="topological domain" description="Mitochondrial intermembrane" evidence="3">
    <location>
        <begin position="78"/>
        <end position="83"/>
    </location>
</feature>
<feature type="modified residue" description="N6-acetyllysine" evidence="4">
    <location>
        <position position="33"/>
    </location>
</feature>